<feature type="chain" id="PRO_0000196776" description="Uncharacterized mitochondrial protein AtMg00540">
    <location>
        <begin position="1"/>
        <end position="122"/>
    </location>
</feature>
<accession>P93309</accession>
<accession>Q6DR86</accession>
<protein>
    <recommendedName>
        <fullName>Uncharacterized mitochondrial protein AtMg00540</fullName>
    </recommendedName>
    <alternativeName>
        <fullName>ORF102b</fullName>
    </alternativeName>
</protein>
<sequence length="122" mass="13809">MYRYEISCPFNLRSPAVPVSSKASSTSFIKTKALRISEVNRELSVPRVYREKSFTRRLNAPIFGSLFVDKESRFANPYSFTLNQGLTRGRGKQAKLAPDRRGKSVVTEVDYRTGVGENIVKD</sequence>
<reference key="1">
    <citation type="journal article" date="1997" name="Nat. Genet.">
        <title>The mitochondrial genome of Arabidopsis thaliana contains 57 genes in 366,924 nucleotides.</title>
        <authorList>
            <person name="Unseld M."/>
            <person name="Marienfeld J.R."/>
            <person name="Brandt P."/>
            <person name="Brennicke A."/>
        </authorList>
    </citation>
    <scope>NUCLEOTIDE SEQUENCE [LARGE SCALE GENOMIC DNA]</scope>
    <source>
        <strain>cv. C24</strain>
    </source>
</reference>
<reference key="2">
    <citation type="journal article" date="2018" name="Plant Cell">
        <title>Correction of persistent errors in Arabidopsis reference mitochondrial genomes.</title>
        <authorList>
            <person name="Sloan D.B."/>
            <person name="Wu Z."/>
            <person name="Sharbrough J."/>
        </authorList>
    </citation>
    <scope>NUCLEOTIDE SEQUENCE [LARGE SCALE GENOMIC DNA]</scope>
    <source>
        <strain>cv. Columbia</strain>
    </source>
</reference>
<reference key="3">
    <citation type="journal article" date="1999" name="Nature">
        <title>Sequence and analysis of chromosome 2 of the plant Arabidopsis thaliana.</title>
        <authorList>
            <person name="Lin X."/>
            <person name="Kaul S."/>
            <person name="Rounsley S.D."/>
            <person name="Shea T.P."/>
            <person name="Benito M.-I."/>
            <person name="Town C.D."/>
            <person name="Fujii C.Y."/>
            <person name="Mason T.M."/>
            <person name="Bowman C.L."/>
            <person name="Barnstead M.E."/>
            <person name="Feldblyum T.V."/>
            <person name="Buell C.R."/>
            <person name="Ketchum K.A."/>
            <person name="Lee J.J."/>
            <person name="Ronning C.M."/>
            <person name="Koo H.L."/>
            <person name="Moffat K.S."/>
            <person name="Cronin L.A."/>
            <person name="Shen M."/>
            <person name="Pai G."/>
            <person name="Van Aken S."/>
            <person name="Umayam L."/>
            <person name="Tallon L.J."/>
            <person name="Gill J.E."/>
            <person name="Adams M.D."/>
            <person name="Carrera A.J."/>
            <person name="Creasy T.H."/>
            <person name="Goodman H.M."/>
            <person name="Somerville C.R."/>
            <person name="Copenhaver G.P."/>
            <person name="Preuss D."/>
            <person name="Nierman W.C."/>
            <person name="White O."/>
            <person name="Eisen J.A."/>
            <person name="Salzberg S.L."/>
            <person name="Fraser C.M."/>
            <person name="Venter J.C."/>
        </authorList>
    </citation>
    <scope>NUCLEOTIDE SEQUENCE [LARGE SCALE GENOMIC DNA] (AT2G07713)</scope>
    <source>
        <strain>cv. Columbia</strain>
    </source>
</reference>
<reference key="4">
    <citation type="journal article" date="2017" name="Plant J.">
        <title>Araport11: a complete reannotation of the Arabidopsis thaliana reference genome.</title>
        <authorList>
            <person name="Cheng C.Y."/>
            <person name="Krishnakumar V."/>
            <person name="Chan A.P."/>
            <person name="Thibaud-Nissen F."/>
            <person name="Schobel S."/>
            <person name="Town C.D."/>
        </authorList>
    </citation>
    <scope>GENOME REANNOTATION (AT2G07713)</scope>
    <source>
        <strain>cv. Columbia</strain>
    </source>
</reference>
<reference key="5">
    <citation type="submission" date="2004-06" db="EMBL/GenBank/DDBJ databases">
        <authorList>
            <person name="Underwood B.A."/>
            <person name="Xiao Y.-L."/>
            <person name="Moskal W.A. Jr."/>
            <person name="Monaghan E.L."/>
            <person name="Wang W."/>
            <person name="Redman J.C."/>
            <person name="Wu H.C."/>
            <person name="Utterback T."/>
            <person name="Town C.D."/>
        </authorList>
    </citation>
    <scope>NUCLEOTIDE SEQUENCE [LARGE SCALE GENOMIC DNA] (AT2G07713)</scope>
    <source>
        <strain>cv. Columbia</strain>
    </source>
</reference>
<reference key="6">
    <citation type="journal article" date="2005" name="Plant Physiol.">
        <title>Analysis of the cDNAs of hypothetical genes on Arabidopsis chromosome 2 reveals numerous transcript variants.</title>
        <authorList>
            <person name="Xiao Y.-L."/>
            <person name="Smith S.R."/>
            <person name="Ishmael N."/>
            <person name="Redman J.C."/>
            <person name="Kumar N."/>
            <person name="Monaghan E.L."/>
            <person name="Ayele M."/>
            <person name="Haas B.J."/>
            <person name="Wu H.C."/>
            <person name="Town C.D."/>
        </authorList>
    </citation>
    <scope>NUCLEOTIDE SEQUENCE [LARGE SCALE MRNA] (AT2G07713)</scope>
    <source>
        <strain>cv. Columbia</strain>
    </source>
</reference>
<comment type="subcellular location">
    <subcellularLocation>
        <location evidence="1">Mitochondrion</location>
    </subcellularLocation>
</comment>
<comment type="miscellaneous">
    <text>A stretch of 270 kb of the mitochondrial genome is duplicated within the centromere of chromosome 2 resulting in the duplication of the gene. The expression of this duplicated gene (At2g07713) is demonstrated.</text>
</comment>
<organism>
    <name type="scientific">Arabidopsis thaliana</name>
    <name type="common">Mouse-ear cress</name>
    <dbReference type="NCBI Taxonomy" id="3702"/>
    <lineage>
        <taxon>Eukaryota</taxon>
        <taxon>Viridiplantae</taxon>
        <taxon>Streptophyta</taxon>
        <taxon>Embryophyta</taxon>
        <taxon>Tracheophyta</taxon>
        <taxon>Spermatophyta</taxon>
        <taxon>Magnoliopsida</taxon>
        <taxon>eudicotyledons</taxon>
        <taxon>Gunneridae</taxon>
        <taxon>Pentapetalae</taxon>
        <taxon>rosids</taxon>
        <taxon>malvids</taxon>
        <taxon>Brassicales</taxon>
        <taxon>Brassicaceae</taxon>
        <taxon>Camelineae</taxon>
        <taxon>Arabidopsis</taxon>
    </lineage>
</organism>
<proteinExistence type="evidence at transcript level"/>
<gene>
    <name evidence="3" type="ordered locus">AtMg00540</name>
</gene>
<gene>
    <name evidence="2" type="ordered locus">At2g07713</name>
</gene>
<evidence type="ECO:0000305" key="1"/>
<evidence type="ECO:0000312" key="2">
    <source>
        <dbReference type="Araport" id="AT2G07713"/>
    </source>
</evidence>
<evidence type="ECO:0000312" key="3">
    <source>
        <dbReference type="Araport" id="ATMG00540"/>
    </source>
</evidence>
<dbReference type="EMBL" id="Y08501">
    <property type="protein sequence ID" value="CAA69738.1"/>
    <property type="molecule type" value="Genomic_DNA"/>
</dbReference>
<dbReference type="EMBL" id="BK010421">
    <property type="status" value="NOT_ANNOTATED_CDS"/>
    <property type="molecule type" value="Genomic_DNA"/>
</dbReference>
<dbReference type="EMBL" id="AC007729">
    <property type="protein sequence ID" value="AAM15497.1"/>
    <property type="molecule type" value="Genomic_DNA"/>
</dbReference>
<dbReference type="EMBL" id="CP002685">
    <property type="protein sequence ID" value="AEC06098.1"/>
    <property type="molecule type" value="Genomic_DNA"/>
</dbReference>
<dbReference type="EMBL" id="AY649229">
    <property type="protein sequence ID" value="AAT69146.1"/>
    <property type="molecule type" value="Genomic_DNA"/>
</dbReference>
<dbReference type="EMBL" id="AY132000">
    <property type="protein sequence ID" value="AAM96890.1"/>
    <property type="molecule type" value="mRNA"/>
</dbReference>
<dbReference type="RefSeq" id="NP_085514.1">
    <property type="nucleotide sequence ID" value="NC_001284.2"/>
</dbReference>
<dbReference type="RefSeq" id="NP_178795.1">
    <property type="nucleotide sequence ID" value="NM_126753.1"/>
</dbReference>
<dbReference type="STRING" id="3702.P93309"/>
<dbReference type="PaxDb" id="3702-AT2G07713.1"/>
<dbReference type="EnsemblPlants" id="AT2G07713.1">
    <property type="protein sequence ID" value="AT2G07713.1"/>
    <property type="gene ID" value="AT2G07713"/>
</dbReference>
<dbReference type="EnsemblPlants" id="ATMG00540.1">
    <property type="protein sequence ID" value="ATMG00540.1"/>
    <property type="gene ID" value="ATMG00540"/>
</dbReference>
<dbReference type="GeneID" id="815387"/>
<dbReference type="Gramene" id="AT2G07713.1">
    <property type="protein sequence ID" value="AT2G07713.1"/>
    <property type="gene ID" value="AT2G07713"/>
</dbReference>
<dbReference type="Gramene" id="ATMG00540.1">
    <property type="protein sequence ID" value="ATMG00540.1"/>
    <property type="gene ID" value="ATMG00540"/>
</dbReference>
<dbReference type="KEGG" id="ath:AT2G07713"/>
<dbReference type="Araport" id="AT2G07713"/>
<dbReference type="Araport" id="ATMG00540"/>
<dbReference type="TAIR" id="AT2G07713"/>
<dbReference type="TAIR" id="ATMG00540">
    <property type="gene designation" value="ORF102B"/>
</dbReference>
<dbReference type="eggNOG" id="ENOG502R1Y7">
    <property type="taxonomic scope" value="Eukaryota"/>
</dbReference>
<dbReference type="HOGENOM" id="CLU_2149284_0_0_1"/>
<dbReference type="InParanoid" id="P93309"/>
<dbReference type="OMA" id="CPFNLRK"/>
<dbReference type="OrthoDB" id="1077093at2759"/>
<dbReference type="PRO" id="PR:P93309"/>
<dbReference type="Proteomes" id="UP000006548">
    <property type="component" value="Chromosome 2"/>
</dbReference>
<dbReference type="Proteomes" id="UP000006548">
    <property type="component" value="Mitochondrion MT"/>
</dbReference>
<dbReference type="GO" id="GO:0005739">
    <property type="term" value="C:mitochondrion"/>
    <property type="evidence" value="ECO:0007669"/>
    <property type="project" value="UniProtKB-SubCell"/>
</dbReference>
<keyword id="KW-0496">Mitochondrion</keyword>
<keyword id="KW-1185">Reference proteome</keyword>
<name>M540_ARATH</name>
<geneLocation type="mitochondrion"/>